<proteinExistence type="inferred from homology"/>
<protein>
    <recommendedName>
        <fullName evidence="1">Glycerol-3-phosphate acyltransferase</fullName>
    </recommendedName>
    <alternativeName>
        <fullName evidence="1">Acyl-PO4 G3P acyltransferase</fullName>
    </alternativeName>
    <alternativeName>
        <fullName evidence="1">Acyl-phosphate--glycerol-3-phosphate acyltransferase</fullName>
    </alternativeName>
    <alternativeName>
        <fullName evidence="1">G3P acyltransferase</fullName>
        <shortName evidence="1">GPAT</shortName>
        <ecNumber evidence="1">2.3.1.275</ecNumber>
    </alternativeName>
    <alternativeName>
        <fullName evidence="1">Lysophosphatidic acid synthase</fullName>
        <shortName evidence="1">LPA synthase</shortName>
    </alternativeName>
</protein>
<organism>
    <name type="scientific">Limosilactobacillus reuteri (strain DSM 20016)</name>
    <name type="common">Lactobacillus reuteri</name>
    <dbReference type="NCBI Taxonomy" id="557436"/>
    <lineage>
        <taxon>Bacteria</taxon>
        <taxon>Bacillati</taxon>
        <taxon>Bacillota</taxon>
        <taxon>Bacilli</taxon>
        <taxon>Lactobacillales</taxon>
        <taxon>Lactobacillaceae</taxon>
        <taxon>Limosilactobacillus</taxon>
    </lineage>
</organism>
<dbReference type="EC" id="2.3.1.275" evidence="1"/>
<dbReference type="EMBL" id="CP000705">
    <property type="protein sequence ID" value="ABQ83045.1"/>
    <property type="molecule type" value="Genomic_DNA"/>
</dbReference>
<dbReference type="RefSeq" id="WP_003666074.1">
    <property type="nucleotide sequence ID" value="NZ_AZDD01000015.1"/>
</dbReference>
<dbReference type="SMR" id="A5VJM1"/>
<dbReference type="STRING" id="557436.Lreu_0781"/>
<dbReference type="GeneID" id="77191094"/>
<dbReference type="KEGG" id="lre:Lreu_0781"/>
<dbReference type="PATRIC" id="fig|557436.17.peg.447"/>
<dbReference type="eggNOG" id="COG0344">
    <property type="taxonomic scope" value="Bacteria"/>
</dbReference>
<dbReference type="HOGENOM" id="CLU_081254_4_0_9"/>
<dbReference type="UniPathway" id="UPA00085"/>
<dbReference type="Proteomes" id="UP000001991">
    <property type="component" value="Chromosome"/>
</dbReference>
<dbReference type="GO" id="GO:0005886">
    <property type="term" value="C:plasma membrane"/>
    <property type="evidence" value="ECO:0007669"/>
    <property type="project" value="UniProtKB-SubCell"/>
</dbReference>
<dbReference type="GO" id="GO:0043772">
    <property type="term" value="F:acyl-phosphate glycerol-3-phosphate acyltransferase activity"/>
    <property type="evidence" value="ECO:0007669"/>
    <property type="project" value="UniProtKB-UniRule"/>
</dbReference>
<dbReference type="GO" id="GO:0008654">
    <property type="term" value="P:phospholipid biosynthetic process"/>
    <property type="evidence" value="ECO:0007669"/>
    <property type="project" value="UniProtKB-UniRule"/>
</dbReference>
<dbReference type="HAMAP" id="MF_01043">
    <property type="entry name" value="PlsY"/>
    <property type="match status" value="1"/>
</dbReference>
<dbReference type="InterPro" id="IPR003811">
    <property type="entry name" value="G3P_acylTferase_PlsY"/>
</dbReference>
<dbReference type="NCBIfam" id="TIGR00023">
    <property type="entry name" value="glycerol-3-phosphate 1-O-acyltransferase PlsY"/>
    <property type="match status" value="1"/>
</dbReference>
<dbReference type="PANTHER" id="PTHR30309:SF0">
    <property type="entry name" value="GLYCEROL-3-PHOSPHATE ACYLTRANSFERASE-RELATED"/>
    <property type="match status" value="1"/>
</dbReference>
<dbReference type="PANTHER" id="PTHR30309">
    <property type="entry name" value="INNER MEMBRANE PROTEIN YGIH"/>
    <property type="match status" value="1"/>
</dbReference>
<dbReference type="Pfam" id="PF02660">
    <property type="entry name" value="G3P_acyltransf"/>
    <property type="match status" value="1"/>
</dbReference>
<dbReference type="SMART" id="SM01207">
    <property type="entry name" value="G3P_acyltransf"/>
    <property type="match status" value="1"/>
</dbReference>
<keyword id="KW-1003">Cell membrane</keyword>
<keyword id="KW-0444">Lipid biosynthesis</keyword>
<keyword id="KW-0443">Lipid metabolism</keyword>
<keyword id="KW-0472">Membrane</keyword>
<keyword id="KW-0594">Phospholipid biosynthesis</keyword>
<keyword id="KW-1208">Phospholipid metabolism</keyword>
<keyword id="KW-1185">Reference proteome</keyword>
<keyword id="KW-0808">Transferase</keyword>
<keyword id="KW-0812">Transmembrane</keyword>
<keyword id="KW-1133">Transmembrane helix</keyword>
<accession>A5VJM1</accession>
<evidence type="ECO:0000255" key="1">
    <source>
        <dbReference type="HAMAP-Rule" id="MF_01043"/>
    </source>
</evidence>
<name>PLSY_LIMRD</name>
<gene>
    <name evidence="1" type="primary">plsY</name>
    <name type="ordered locus">Lreu_0781</name>
</gene>
<sequence length="209" mass="22667">MFFEIIGMIIIAYLLGSIPTGLWIGKYIYHKDIRKLGSGNIGTTNTFRTLGFKAGVVVLFIDILKGTLAASQPYFLGISGTVNPLLIGLFASLGHTVSIFDNFHGGKAVATSAGILLAYNPLLFVVACLIFIFVLCLTSMVSAASMVGISAIFIIALFIHAWILAIVAGILTGVVFYRHRSNIHRILSGKESMVSFGLGYYLREKKQNK</sequence>
<reference key="1">
    <citation type="journal article" date="2011" name="PLoS Genet.">
        <title>The evolution of host specialization in the vertebrate gut symbiont Lactobacillus reuteri.</title>
        <authorList>
            <person name="Frese S.A."/>
            <person name="Benson A.K."/>
            <person name="Tannock G.W."/>
            <person name="Loach D.M."/>
            <person name="Kim J."/>
            <person name="Zhang M."/>
            <person name="Oh P.L."/>
            <person name="Heng N.C."/>
            <person name="Patil P.B."/>
            <person name="Juge N."/>
            <person name="Mackenzie D.A."/>
            <person name="Pearson B.M."/>
            <person name="Lapidus A."/>
            <person name="Dalin E."/>
            <person name="Tice H."/>
            <person name="Goltsman E."/>
            <person name="Land M."/>
            <person name="Hauser L."/>
            <person name="Ivanova N."/>
            <person name="Kyrpides N.C."/>
            <person name="Walter J."/>
        </authorList>
    </citation>
    <scope>NUCLEOTIDE SEQUENCE [LARGE SCALE GENOMIC DNA]</scope>
    <source>
        <strain>DSM 20016</strain>
    </source>
</reference>
<feature type="chain" id="PRO_1000064191" description="Glycerol-3-phosphate acyltransferase">
    <location>
        <begin position="1"/>
        <end position="209"/>
    </location>
</feature>
<feature type="transmembrane region" description="Helical" evidence="1">
    <location>
        <begin position="5"/>
        <end position="25"/>
    </location>
</feature>
<feature type="transmembrane region" description="Helical" evidence="1">
    <location>
        <begin position="50"/>
        <end position="70"/>
    </location>
</feature>
<feature type="transmembrane region" description="Helical" evidence="1">
    <location>
        <begin position="74"/>
        <end position="94"/>
    </location>
</feature>
<feature type="transmembrane region" description="Helical" evidence="1">
    <location>
        <begin position="115"/>
        <end position="135"/>
    </location>
</feature>
<feature type="transmembrane region" description="Helical" evidence="1">
    <location>
        <begin position="151"/>
        <end position="171"/>
    </location>
</feature>
<comment type="function">
    <text evidence="1">Catalyzes the transfer of an acyl group from acyl-phosphate (acyl-PO(4)) to glycerol-3-phosphate (G3P) to form lysophosphatidic acid (LPA). This enzyme utilizes acyl-phosphate as fatty acyl donor, but not acyl-CoA or acyl-ACP.</text>
</comment>
<comment type="catalytic activity">
    <reaction evidence="1">
        <text>an acyl phosphate + sn-glycerol 3-phosphate = a 1-acyl-sn-glycero-3-phosphate + phosphate</text>
        <dbReference type="Rhea" id="RHEA:34075"/>
        <dbReference type="ChEBI" id="CHEBI:43474"/>
        <dbReference type="ChEBI" id="CHEBI:57597"/>
        <dbReference type="ChEBI" id="CHEBI:57970"/>
        <dbReference type="ChEBI" id="CHEBI:59918"/>
        <dbReference type="EC" id="2.3.1.275"/>
    </reaction>
</comment>
<comment type="pathway">
    <text evidence="1">Lipid metabolism; phospholipid metabolism.</text>
</comment>
<comment type="subunit">
    <text evidence="1">Probably interacts with PlsX.</text>
</comment>
<comment type="subcellular location">
    <subcellularLocation>
        <location evidence="1">Cell membrane</location>
        <topology evidence="1">Multi-pass membrane protein</topology>
    </subcellularLocation>
</comment>
<comment type="similarity">
    <text evidence="1">Belongs to the PlsY family.</text>
</comment>